<reference key="1">
    <citation type="journal article" date="2007" name="PLoS Genet.">
        <title>Meningococcal genetic variation mechanisms viewed through comparative analysis of serogroup C strain FAM18.</title>
        <authorList>
            <person name="Bentley S.D."/>
            <person name="Vernikos G.S."/>
            <person name="Snyder L.A.S."/>
            <person name="Churcher C."/>
            <person name="Arrowsmith C."/>
            <person name="Chillingworth T."/>
            <person name="Cronin A."/>
            <person name="Davis P.H."/>
            <person name="Holroyd N.E."/>
            <person name="Jagels K."/>
            <person name="Maddison M."/>
            <person name="Moule S."/>
            <person name="Rabbinowitsch E."/>
            <person name="Sharp S."/>
            <person name="Unwin L."/>
            <person name="Whitehead S."/>
            <person name="Quail M.A."/>
            <person name="Achtman M."/>
            <person name="Barrell B.G."/>
            <person name="Saunders N.J."/>
            <person name="Parkhill J."/>
        </authorList>
    </citation>
    <scope>NUCLEOTIDE SEQUENCE [LARGE SCALE GENOMIC DNA]</scope>
    <source>
        <strain>ATCC 700532 / DSM 15464 / FAM18</strain>
    </source>
</reference>
<keyword id="KW-0963">Cytoplasm</keyword>
<keyword id="KW-0489">Methyltransferase</keyword>
<keyword id="KW-0949">S-adenosyl-L-methionine</keyword>
<keyword id="KW-0808">Transferase</keyword>
<gene>
    <name evidence="1" type="primary">prmA</name>
    <name type="ordered locus">NMC0356</name>
</gene>
<proteinExistence type="inferred from homology"/>
<accession>A1KS36</accession>
<name>PRMA_NEIMF</name>
<organism>
    <name type="scientific">Neisseria meningitidis serogroup C / serotype 2a (strain ATCC 700532 / DSM 15464 / FAM18)</name>
    <dbReference type="NCBI Taxonomy" id="272831"/>
    <lineage>
        <taxon>Bacteria</taxon>
        <taxon>Pseudomonadati</taxon>
        <taxon>Pseudomonadota</taxon>
        <taxon>Betaproteobacteria</taxon>
        <taxon>Neisseriales</taxon>
        <taxon>Neisseriaceae</taxon>
        <taxon>Neisseria</taxon>
    </lineage>
</organism>
<feature type="chain" id="PRO_1000046050" description="Ribosomal protein L11 methyltransferase">
    <location>
        <begin position="1"/>
        <end position="295"/>
    </location>
</feature>
<feature type="binding site" evidence="1">
    <location>
        <position position="150"/>
    </location>
    <ligand>
        <name>S-adenosyl-L-methionine</name>
        <dbReference type="ChEBI" id="CHEBI:59789"/>
    </ligand>
</feature>
<feature type="binding site" evidence="1">
    <location>
        <position position="171"/>
    </location>
    <ligand>
        <name>S-adenosyl-L-methionine</name>
        <dbReference type="ChEBI" id="CHEBI:59789"/>
    </ligand>
</feature>
<feature type="binding site" evidence="1">
    <location>
        <position position="193"/>
    </location>
    <ligand>
        <name>S-adenosyl-L-methionine</name>
        <dbReference type="ChEBI" id="CHEBI:59789"/>
    </ligand>
</feature>
<feature type="binding site" evidence="1">
    <location>
        <position position="232"/>
    </location>
    <ligand>
        <name>S-adenosyl-L-methionine</name>
        <dbReference type="ChEBI" id="CHEBI:59789"/>
    </ligand>
</feature>
<protein>
    <recommendedName>
        <fullName evidence="1">Ribosomal protein L11 methyltransferase</fullName>
        <shortName evidence="1">L11 Mtase</shortName>
        <ecNumber evidence="1">2.1.1.-</ecNumber>
    </recommendedName>
</protein>
<evidence type="ECO:0000255" key="1">
    <source>
        <dbReference type="HAMAP-Rule" id="MF_00735"/>
    </source>
</evidence>
<sequence length="295" mass="31933">MPYQQITINVNDAVAERLADALMEHGALSAAIEDAYAGTQNEQAIFGEPGMPAEQIWQQSKVIALFGEHDEAAAIIQIAAQECGLKDLAYTGETIEDQDWVRLTQSQFDPIRISDRLWITPSWHEAPEGTAVNLRLDPGLAFGTGSHPTTRLCLKWLDTQLKNGESVLDYGCGSGILTIAALKLGAGSAVGVDIDEQAVRAGKDNAEQNNVDAQFFLPDGLPQGQFDVVVANILANPLRMLGEMLAARTKQGGRIVLSGLLDEQAEELGGIYSQWFDLDPAETEEGWARLSGTKR</sequence>
<comment type="function">
    <text evidence="1">Methylates ribosomal protein L11.</text>
</comment>
<comment type="catalytic activity">
    <reaction evidence="1">
        <text>L-lysyl-[protein] + 3 S-adenosyl-L-methionine = N(6),N(6),N(6)-trimethyl-L-lysyl-[protein] + 3 S-adenosyl-L-homocysteine + 3 H(+)</text>
        <dbReference type="Rhea" id="RHEA:54192"/>
        <dbReference type="Rhea" id="RHEA-COMP:9752"/>
        <dbReference type="Rhea" id="RHEA-COMP:13826"/>
        <dbReference type="ChEBI" id="CHEBI:15378"/>
        <dbReference type="ChEBI" id="CHEBI:29969"/>
        <dbReference type="ChEBI" id="CHEBI:57856"/>
        <dbReference type="ChEBI" id="CHEBI:59789"/>
        <dbReference type="ChEBI" id="CHEBI:61961"/>
    </reaction>
</comment>
<comment type="subcellular location">
    <subcellularLocation>
        <location evidence="1">Cytoplasm</location>
    </subcellularLocation>
</comment>
<comment type="similarity">
    <text evidence="1">Belongs to the methyltransferase superfamily. PrmA family.</text>
</comment>
<dbReference type="EC" id="2.1.1.-" evidence="1"/>
<dbReference type="EMBL" id="AM421808">
    <property type="protein sequence ID" value="CAM09666.1"/>
    <property type="molecule type" value="Genomic_DNA"/>
</dbReference>
<dbReference type="RefSeq" id="WP_002221520.1">
    <property type="nucleotide sequence ID" value="NC_008767.1"/>
</dbReference>
<dbReference type="SMR" id="A1KS36"/>
<dbReference type="KEGG" id="nmc:NMC0356"/>
<dbReference type="HOGENOM" id="CLU_049382_4_1_4"/>
<dbReference type="Proteomes" id="UP000002286">
    <property type="component" value="Chromosome"/>
</dbReference>
<dbReference type="GO" id="GO:0005829">
    <property type="term" value="C:cytosol"/>
    <property type="evidence" value="ECO:0007669"/>
    <property type="project" value="TreeGrafter"/>
</dbReference>
<dbReference type="GO" id="GO:0016279">
    <property type="term" value="F:protein-lysine N-methyltransferase activity"/>
    <property type="evidence" value="ECO:0007669"/>
    <property type="project" value="TreeGrafter"/>
</dbReference>
<dbReference type="GO" id="GO:0032259">
    <property type="term" value="P:methylation"/>
    <property type="evidence" value="ECO:0007669"/>
    <property type="project" value="UniProtKB-KW"/>
</dbReference>
<dbReference type="CDD" id="cd02440">
    <property type="entry name" value="AdoMet_MTases"/>
    <property type="match status" value="1"/>
</dbReference>
<dbReference type="Gene3D" id="3.40.50.150">
    <property type="entry name" value="Vaccinia Virus protein VP39"/>
    <property type="match status" value="1"/>
</dbReference>
<dbReference type="HAMAP" id="MF_00735">
    <property type="entry name" value="Methyltr_PrmA"/>
    <property type="match status" value="1"/>
</dbReference>
<dbReference type="InterPro" id="IPR050078">
    <property type="entry name" value="Ribosomal_L11_MeTrfase_PrmA"/>
</dbReference>
<dbReference type="InterPro" id="IPR004498">
    <property type="entry name" value="Ribosomal_PrmA_MeTrfase"/>
</dbReference>
<dbReference type="InterPro" id="IPR029063">
    <property type="entry name" value="SAM-dependent_MTases_sf"/>
</dbReference>
<dbReference type="NCBIfam" id="TIGR00406">
    <property type="entry name" value="prmA"/>
    <property type="match status" value="1"/>
</dbReference>
<dbReference type="PANTHER" id="PTHR43648">
    <property type="entry name" value="ELECTRON TRANSFER FLAVOPROTEIN BETA SUBUNIT LYSINE METHYLTRANSFERASE"/>
    <property type="match status" value="1"/>
</dbReference>
<dbReference type="PANTHER" id="PTHR43648:SF1">
    <property type="entry name" value="ELECTRON TRANSFER FLAVOPROTEIN BETA SUBUNIT LYSINE METHYLTRANSFERASE"/>
    <property type="match status" value="1"/>
</dbReference>
<dbReference type="Pfam" id="PF06325">
    <property type="entry name" value="PrmA"/>
    <property type="match status" value="1"/>
</dbReference>
<dbReference type="PIRSF" id="PIRSF000401">
    <property type="entry name" value="RPL11_MTase"/>
    <property type="match status" value="1"/>
</dbReference>
<dbReference type="SUPFAM" id="SSF53335">
    <property type="entry name" value="S-adenosyl-L-methionine-dependent methyltransferases"/>
    <property type="match status" value="1"/>
</dbReference>